<dbReference type="EC" id="3.1.-.-" evidence="1"/>
<dbReference type="EMBL" id="U82598">
    <property type="protein sequence ID" value="AAB40861.1"/>
    <property type="molecule type" value="Genomic_DNA"/>
</dbReference>
<dbReference type="EMBL" id="U00096">
    <property type="protein sequence ID" value="AAC73760.1"/>
    <property type="molecule type" value="Genomic_DNA"/>
</dbReference>
<dbReference type="EMBL" id="AP009048">
    <property type="protein sequence ID" value="BAA35314.1"/>
    <property type="molecule type" value="Genomic_DNA"/>
</dbReference>
<dbReference type="PIR" id="A64801">
    <property type="entry name" value="A64801"/>
</dbReference>
<dbReference type="RefSeq" id="NP_415192.1">
    <property type="nucleotide sequence ID" value="NC_000913.3"/>
</dbReference>
<dbReference type="RefSeq" id="WP_000084469.1">
    <property type="nucleotide sequence ID" value="NZ_SSZK01000037.1"/>
</dbReference>
<dbReference type="PDB" id="1XM5">
    <property type="method" value="X-ray"/>
    <property type="resolution" value="2.70 A"/>
    <property type="chains" value="A/B/C/D=1-155"/>
</dbReference>
<dbReference type="PDBsum" id="1XM5"/>
<dbReference type="SMR" id="P0A898"/>
<dbReference type="BioGRID" id="4261388">
    <property type="interactions" value="80"/>
</dbReference>
<dbReference type="DIP" id="DIP-48144N"/>
<dbReference type="FunCoup" id="P0A898">
    <property type="interactions" value="304"/>
</dbReference>
<dbReference type="IntAct" id="P0A898">
    <property type="interactions" value="15"/>
</dbReference>
<dbReference type="STRING" id="511145.b0659"/>
<dbReference type="jPOST" id="P0A898"/>
<dbReference type="PaxDb" id="511145-b0659"/>
<dbReference type="DNASU" id="946430"/>
<dbReference type="EnsemblBacteria" id="AAC73760">
    <property type="protein sequence ID" value="AAC73760"/>
    <property type="gene ID" value="b0659"/>
</dbReference>
<dbReference type="GeneID" id="93776823"/>
<dbReference type="GeneID" id="946430"/>
<dbReference type="KEGG" id="ecj:JW0656"/>
<dbReference type="KEGG" id="eco:b0659"/>
<dbReference type="KEGG" id="ecoc:C3026_03295"/>
<dbReference type="PATRIC" id="fig|1411691.4.peg.1609"/>
<dbReference type="EchoBASE" id="EB3419"/>
<dbReference type="eggNOG" id="COG0319">
    <property type="taxonomic scope" value="Bacteria"/>
</dbReference>
<dbReference type="HOGENOM" id="CLU_106710_0_1_6"/>
<dbReference type="InParanoid" id="P0A898"/>
<dbReference type="OMA" id="RMRIHPL"/>
<dbReference type="OrthoDB" id="9807740at2"/>
<dbReference type="PhylomeDB" id="P0A898"/>
<dbReference type="BioCyc" id="EcoCyc:G6362-MONOMER"/>
<dbReference type="EvolutionaryTrace" id="P0A898"/>
<dbReference type="PRO" id="PR:P0A898"/>
<dbReference type="Proteomes" id="UP000000625">
    <property type="component" value="Chromosome"/>
</dbReference>
<dbReference type="GO" id="GO:0005737">
    <property type="term" value="C:cytoplasm"/>
    <property type="evidence" value="ECO:0007669"/>
    <property type="project" value="UniProtKB-SubCell"/>
</dbReference>
<dbReference type="GO" id="GO:0004222">
    <property type="term" value="F:metalloendopeptidase activity"/>
    <property type="evidence" value="ECO:0007669"/>
    <property type="project" value="InterPro"/>
</dbReference>
<dbReference type="GO" id="GO:0016151">
    <property type="term" value="F:nickel cation binding"/>
    <property type="evidence" value="ECO:0000314"/>
    <property type="project" value="EcoCyc"/>
</dbReference>
<dbReference type="GO" id="GO:0016892">
    <property type="term" value="F:RNA endonuclease activity, producing 3'-phosphomonoesters"/>
    <property type="evidence" value="ECO:0000314"/>
    <property type="project" value="EcoCyc"/>
</dbReference>
<dbReference type="GO" id="GO:0008270">
    <property type="term" value="F:zinc ion binding"/>
    <property type="evidence" value="ECO:0007669"/>
    <property type="project" value="UniProtKB-UniRule"/>
</dbReference>
<dbReference type="GO" id="GO:0030490">
    <property type="term" value="P:maturation of SSU-rRNA"/>
    <property type="evidence" value="ECO:0000315"/>
    <property type="project" value="EcoCyc"/>
</dbReference>
<dbReference type="GO" id="GO:0009408">
    <property type="term" value="P:response to heat"/>
    <property type="evidence" value="ECO:0000315"/>
    <property type="project" value="EcoCyc"/>
</dbReference>
<dbReference type="GO" id="GO:0042274">
    <property type="term" value="P:ribosomal small subunit biogenesis"/>
    <property type="evidence" value="ECO:0000315"/>
    <property type="project" value="EcoCyc"/>
</dbReference>
<dbReference type="GO" id="GO:0042254">
    <property type="term" value="P:ribosome biogenesis"/>
    <property type="evidence" value="ECO:0000315"/>
    <property type="project" value="UniProtKB"/>
</dbReference>
<dbReference type="GO" id="GO:0006364">
    <property type="term" value="P:rRNA processing"/>
    <property type="evidence" value="ECO:0000315"/>
    <property type="project" value="UniProtKB"/>
</dbReference>
<dbReference type="GO" id="GO:0031564">
    <property type="term" value="P:transcription antitermination"/>
    <property type="evidence" value="ECO:0000315"/>
    <property type="project" value="EcoCyc"/>
</dbReference>
<dbReference type="GO" id="GO:0006412">
    <property type="term" value="P:translation"/>
    <property type="evidence" value="ECO:0000315"/>
    <property type="project" value="EcoCyc"/>
</dbReference>
<dbReference type="FunFam" id="3.40.390.30:FF:000001">
    <property type="entry name" value="Endoribonuclease YbeY"/>
    <property type="match status" value="1"/>
</dbReference>
<dbReference type="Gene3D" id="3.40.390.30">
    <property type="entry name" value="Metalloproteases ('zincins'), catalytic domain"/>
    <property type="match status" value="1"/>
</dbReference>
<dbReference type="HAMAP" id="MF_00009">
    <property type="entry name" value="Endoribonucl_YbeY"/>
    <property type="match status" value="1"/>
</dbReference>
<dbReference type="InterPro" id="IPR023091">
    <property type="entry name" value="MetalPrtase_cat_dom_sf_prd"/>
</dbReference>
<dbReference type="InterPro" id="IPR002036">
    <property type="entry name" value="YbeY"/>
</dbReference>
<dbReference type="InterPro" id="IPR020549">
    <property type="entry name" value="YbeY_CS"/>
</dbReference>
<dbReference type="NCBIfam" id="TIGR00043">
    <property type="entry name" value="rRNA maturation RNase YbeY"/>
    <property type="match status" value="1"/>
</dbReference>
<dbReference type="PANTHER" id="PTHR46986">
    <property type="entry name" value="ENDORIBONUCLEASE YBEY, CHLOROPLASTIC"/>
    <property type="match status" value="1"/>
</dbReference>
<dbReference type="PANTHER" id="PTHR46986:SF1">
    <property type="entry name" value="ENDORIBONUCLEASE YBEY, CHLOROPLASTIC"/>
    <property type="match status" value="1"/>
</dbReference>
<dbReference type="Pfam" id="PF02130">
    <property type="entry name" value="YbeY"/>
    <property type="match status" value="1"/>
</dbReference>
<dbReference type="SUPFAM" id="SSF55486">
    <property type="entry name" value="Metalloproteases ('zincins'), catalytic domain"/>
    <property type="match status" value="1"/>
</dbReference>
<dbReference type="PROSITE" id="PS01306">
    <property type="entry name" value="UPF0054"/>
    <property type="match status" value="1"/>
</dbReference>
<keyword id="KW-0002">3D-structure</keyword>
<keyword id="KW-0963">Cytoplasm</keyword>
<keyword id="KW-0255">Endonuclease</keyword>
<keyword id="KW-0378">Hydrolase</keyword>
<keyword id="KW-0479">Metal-binding</keyword>
<keyword id="KW-0540">Nuclease</keyword>
<keyword id="KW-1185">Reference proteome</keyword>
<keyword id="KW-0690">Ribosome biogenesis</keyword>
<keyword id="KW-0698">rRNA processing</keyword>
<keyword id="KW-0862">Zinc</keyword>
<proteinExistence type="evidence at protein level"/>
<protein>
    <recommendedName>
        <fullName evidence="1">Endoribonuclease YbeY</fullName>
        <ecNumber evidence="1">3.1.-.-</ecNumber>
    </recommendedName>
</protein>
<organism>
    <name type="scientific">Escherichia coli (strain K12)</name>
    <dbReference type="NCBI Taxonomy" id="83333"/>
    <lineage>
        <taxon>Bacteria</taxon>
        <taxon>Pseudomonadati</taxon>
        <taxon>Pseudomonadota</taxon>
        <taxon>Gammaproteobacteria</taxon>
        <taxon>Enterobacterales</taxon>
        <taxon>Enterobacteriaceae</taxon>
        <taxon>Escherichia</taxon>
    </lineage>
</organism>
<name>YBEY_ECOLI</name>
<feature type="chain" id="PRO_0000102449" description="Endoribonuclease YbeY">
    <location>
        <begin position="1"/>
        <end position="155"/>
    </location>
</feature>
<feature type="binding site" evidence="8">
    <location>
        <position position="114"/>
    </location>
    <ligand>
        <name>Zn(2+)</name>
        <dbReference type="ChEBI" id="CHEBI:29105"/>
        <note>catalytic</note>
    </ligand>
</feature>
<feature type="binding site" evidence="8">
    <location>
        <position position="118"/>
    </location>
    <ligand>
        <name>Zn(2+)</name>
        <dbReference type="ChEBI" id="CHEBI:29105"/>
        <note>catalytic</note>
    </ligand>
</feature>
<feature type="binding site" evidence="8">
    <location>
        <position position="124"/>
    </location>
    <ligand>
        <name>Zn(2+)</name>
        <dbReference type="ChEBI" id="CHEBI:29105"/>
        <note>catalytic</note>
    </ligand>
</feature>
<feature type="mutagenesis site" description="Loss of activity." evidence="6 7">
    <original>R</original>
    <variation>A</variation>
    <variation>E</variation>
    <location>
        <position position="59"/>
    </location>
</feature>
<feature type="mutagenesis site" description="Loss of activity." evidence="6 7">
    <original>H</original>
    <variation>A</variation>
    <location>
        <position position="114"/>
    </location>
</feature>
<feature type="mutagenesis site" description="No change in activity." evidence="6">
    <original>H</original>
    <variation>A</variation>
    <location>
        <position position="118"/>
    </location>
</feature>
<feature type="mutagenesis site" description="No change in activity." evidence="6">
    <original>H</original>
    <variation>A</variation>
    <location>
        <position position="124"/>
    </location>
</feature>
<feature type="strand" evidence="9">
    <location>
        <begin position="3"/>
        <end position="10"/>
    </location>
</feature>
<feature type="strand" evidence="9">
    <location>
        <begin position="12"/>
        <end position="14"/>
    </location>
</feature>
<feature type="helix" evidence="9">
    <location>
        <begin position="21"/>
        <end position="29"/>
    </location>
</feature>
<feature type="helix" evidence="9">
    <location>
        <begin position="33"/>
        <end position="36"/>
    </location>
</feature>
<feature type="strand" evidence="9">
    <location>
        <begin position="37"/>
        <end position="46"/>
    </location>
</feature>
<feature type="helix" evidence="9">
    <location>
        <begin position="48"/>
        <end position="59"/>
    </location>
</feature>
<feature type="strand" evidence="9">
    <location>
        <begin position="66"/>
        <end position="71"/>
    </location>
</feature>
<feature type="strand" evidence="9">
    <location>
        <begin position="82"/>
        <end position="89"/>
    </location>
</feature>
<feature type="helix" evidence="9">
    <location>
        <begin position="90"/>
        <end position="99"/>
    </location>
</feature>
<feature type="helix" evidence="9">
    <location>
        <begin position="104"/>
        <end position="119"/>
    </location>
</feature>
<feature type="helix" evidence="9">
    <location>
        <begin position="127"/>
        <end position="143"/>
    </location>
</feature>
<gene>
    <name evidence="1" type="primary">ybeY</name>
    <name type="ordered locus">b0659</name>
    <name type="ordered locus">JW0656</name>
</gene>
<sequence>MSQVILDLQLACEDNSGLPEESQFQTWLNAVIPQFQEESEVTIRVVDTAESHSLNLTYRGKDKPTNVLSFPFEVPPGMEMSLLGDLVICRQVVEKEAQEQGKPLEAHWAHMVVHGSLHLLGYDHIEDDEAEEMEALETEIMLALGYEDPYIAEKE</sequence>
<comment type="function">
    <text evidence="1 2 5 6 7">Single strand-specific metallo-endoribonuclease involved in late-stage 70S ribosome quality control and in maturation of the 3' terminus of the 16S rRNA. Acts together with the RNase R to eliminate defective 70S ribosomes, but not properly matured 70S ribosomes or individual subunits, by a process mediated specifically by the 30S ribosomal subunit. Involved in the processing of 16S, 23S and 5S rRNAs, with a particularly strong effect on maturation at both the 5'- and 3'-ends of 16S rRNA as well as maturation of the 5'-end of 23S and 5S rRNAs.</text>
</comment>
<comment type="cofactor">
    <cofactor evidence="1">
        <name>Zn(2+)</name>
        <dbReference type="ChEBI" id="CHEBI:29105"/>
    </cofactor>
    <text evidence="1">Binds 1 zinc ion.</text>
</comment>
<comment type="activity regulation">
    <text evidence="7">Inhibited by EDTA.</text>
</comment>
<comment type="interaction">
    <interactant intactId="EBI-560240">
        <id>P0A898</id>
    </interactant>
    <interactant intactId="EBI-562154">
        <id>P0DTT0</id>
        <label>bipA</label>
    </interactant>
    <organismsDiffer>false</organismsDiffer>
    <experiments>2</experiments>
</comment>
<comment type="interaction">
    <interactant intactId="EBI-560240">
        <id>P0A898</id>
    </interactant>
    <interactant intactId="EBI-560255">
        <id>P0A9K3</id>
        <label>ybeZ</label>
    </interactant>
    <organismsDiffer>false</organismsDiffer>
    <experiments>2</experiments>
</comment>
<comment type="subcellular location">
    <subcellularLocation>
        <location evidence="1 5">Cytoplasm</location>
    </subcellularLocation>
</comment>
<comment type="induction">
    <text evidence="3">By heat shock.</text>
</comment>
<comment type="disruption phenotype">
    <text evidence="4 5 6 7">Mutants show defects in 16S rRNA maturation, ribosome activity, translational fidelity, and ribosome assembly. They have severe growth defect at high temperatures, essentially no thermotolerance at lethal temperatures. They also show a decrease in polysomes and a large increase in both free 50S and free 30S ribosomal subunits relative to 70S ribosomes.</text>
</comment>
<comment type="similarity">
    <text evidence="1">Belongs to the endoribonuclease YbeY family.</text>
</comment>
<reference key="1">
    <citation type="journal article" date="1996" name="DNA Res.">
        <title>A 718-kb DNA sequence of the Escherichia coli K-12 genome corresponding to the 12.7-28.0 min region on the linkage map.</title>
        <authorList>
            <person name="Oshima T."/>
            <person name="Aiba H."/>
            <person name="Baba T."/>
            <person name="Fujita K."/>
            <person name="Hayashi K."/>
            <person name="Honjo A."/>
            <person name="Ikemoto K."/>
            <person name="Inada T."/>
            <person name="Itoh T."/>
            <person name="Kajihara M."/>
            <person name="Kanai K."/>
            <person name="Kashimoto K."/>
            <person name="Kimura S."/>
            <person name="Kitagawa M."/>
            <person name="Makino K."/>
            <person name="Masuda S."/>
            <person name="Miki T."/>
            <person name="Mizobuchi K."/>
            <person name="Mori H."/>
            <person name="Motomura K."/>
            <person name="Nakamura Y."/>
            <person name="Nashimoto H."/>
            <person name="Nishio Y."/>
            <person name="Saito N."/>
            <person name="Sampei G."/>
            <person name="Seki Y."/>
            <person name="Tagami H."/>
            <person name="Takemoto K."/>
            <person name="Wada C."/>
            <person name="Yamamoto Y."/>
            <person name="Yano M."/>
            <person name="Horiuchi T."/>
        </authorList>
    </citation>
    <scope>NUCLEOTIDE SEQUENCE [LARGE SCALE GENOMIC DNA]</scope>
    <source>
        <strain>K12 / W3110 / ATCC 27325 / DSM 5911</strain>
    </source>
</reference>
<reference key="2">
    <citation type="submission" date="1997-01" db="EMBL/GenBank/DDBJ databases">
        <title>Sequence of minutes 4-25 of Escherichia coli.</title>
        <authorList>
            <person name="Chung E."/>
            <person name="Allen E."/>
            <person name="Araujo R."/>
            <person name="Aparicio A.M."/>
            <person name="Davis K."/>
            <person name="Duncan M."/>
            <person name="Federspiel N."/>
            <person name="Hyman R."/>
            <person name="Kalman S."/>
            <person name="Komp C."/>
            <person name="Kurdi O."/>
            <person name="Lew H."/>
            <person name="Lin D."/>
            <person name="Namath A."/>
            <person name="Oefner P."/>
            <person name="Roberts D."/>
            <person name="Schramm S."/>
            <person name="Davis R.W."/>
        </authorList>
    </citation>
    <scope>NUCLEOTIDE SEQUENCE [LARGE SCALE GENOMIC DNA]</scope>
    <source>
        <strain>K12 / MG1655 / ATCC 47076</strain>
    </source>
</reference>
<reference key="3">
    <citation type="journal article" date="1997" name="Science">
        <title>The complete genome sequence of Escherichia coli K-12.</title>
        <authorList>
            <person name="Blattner F.R."/>
            <person name="Plunkett G. III"/>
            <person name="Bloch C.A."/>
            <person name="Perna N.T."/>
            <person name="Burland V."/>
            <person name="Riley M."/>
            <person name="Collado-Vides J."/>
            <person name="Glasner J.D."/>
            <person name="Rode C.K."/>
            <person name="Mayhew G.F."/>
            <person name="Gregor J."/>
            <person name="Davis N.W."/>
            <person name="Kirkpatrick H.A."/>
            <person name="Goeden M.A."/>
            <person name="Rose D.J."/>
            <person name="Mau B."/>
            <person name="Shao Y."/>
        </authorList>
    </citation>
    <scope>NUCLEOTIDE SEQUENCE [LARGE SCALE GENOMIC DNA]</scope>
    <source>
        <strain>K12 / MG1655 / ATCC 47076</strain>
    </source>
</reference>
<reference key="4">
    <citation type="journal article" date="2006" name="Mol. Syst. Biol.">
        <title>Highly accurate genome sequences of Escherichia coli K-12 strains MG1655 and W3110.</title>
        <authorList>
            <person name="Hayashi K."/>
            <person name="Morooka N."/>
            <person name="Yamamoto Y."/>
            <person name="Fujita K."/>
            <person name="Isono K."/>
            <person name="Choi S."/>
            <person name="Ohtsubo E."/>
            <person name="Baba T."/>
            <person name="Wanner B.L."/>
            <person name="Mori H."/>
            <person name="Horiuchi T."/>
        </authorList>
    </citation>
    <scope>NUCLEOTIDE SEQUENCE [LARGE SCALE GENOMIC DNA]</scope>
    <source>
        <strain>K12 / W3110 / ATCC 27325 / DSM 5911</strain>
    </source>
</reference>
<reference key="5">
    <citation type="journal article" date="2006" name="Genes Dev.">
        <title>Regulon and promoter analysis of the E. coli heat-shock factor, sigma32, reveals a multifaceted cellular response to heat stress.</title>
        <authorList>
            <person name="Nonaka G."/>
            <person name="Blankschien M."/>
            <person name="Herman C."/>
            <person name="Gross C.A."/>
            <person name="Rhodius V.A."/>
        </authorList>
    </citation>
    <scope>INDUCTION</scope>
    <source>
        <strain>K12 / MG1655 / ATCC 47076</strain>
    </source>
</reference>
<reference key="6">
    <citation type="journal article" date="2009" name="J. Bacteriol.">
        <title>YbeY, a heat shock protein involved in translation in Escherichia coli.</title>
        <authorList>
            <person name="Rasouly A."/>
            <person name="Schonbrun M."/>
            <person name="Shenhar Y."/>
            <person name="Ron E.Z."/>
        </authorList>
    </citation>
    <scope>DISRUPTION PHENOTYPE</scope>
    <source>
        <strain>K12 / MG1655 / ATCC 47076</strain>
    </source>
</reference>
<reference key="7">
    <citation type="journal article" date="2010" name="J. Bacteriol.">
        <title>The heat shock protein YbeY is required for optimal activity of the 30S ribosomal subunit.</title>
        <authorList>
            <person name="Rasouly A."/>
            <person name="Davidovich C."/>
            <person name="Ron E.Z."/>
        </authorList>
    </citation>
    <scope>FUNCTION</scope>
    <scope>SUBCELLULAR LOCATION</scope>
    <scope>DISRUPTION PHENOTYPE</scope>
    <source>
        <strain>K12 / MG1655 / ATCC 47076</strain>
    </source>
</reference>
<reference key="8">
    <citation type="journal article" date="2010" name="Mol. Microbiol.">
        <title>Role of Escherichia coli YbeY, a highly conserved protein, in rRNA processing.</title>
        <authorList>
            <person name="Davies B.W."/>
            <person name="Kohrer C."/>
            <person name="Jacob A.I."/>
            <person name="Simmons L.A."/>
            <person name="Zhu J."/>
            <person name="Aleman L.M."/>
            <person name="Rajbhandary U.L."/>
            <person name="Walker G.C."/>
        </authorList>
    </citation>
    <scope>FUNCTION</scope>
    <scope>DISRUPTION PHENOTYPE</scope>
    <scope>MUTAGENESIS OF ARG-59; HIS-114; HIS-118 AND HIS-124</scope>
    <source>
        <strain>K12 / MC4100 / ATCC 35695 / DSM 6574</strain>
    </source>
</reference>
<reference key="9">
    <citation type="journal article" date="2013" name="Mol. Cell">
        <title>Conserved bacterial RNase YbeY plays key roles in 70S ribosome quality control and 16S rRNA maturation.</title>
        <authorList>
            <person name="Jacob A.I."/>
            <person name="Kohrer C."/>
            <person name="Davies B.W."/>
            <person name="Rajbhandary U.L."/>
            <person name="Walker G.C."/>
        </authorList>
    </citation>
    <scope>FUNCTION</scope>
    <scope>ACTIVITY REGULATION</scope>
    <scope>DISRUPTION PHENOTYPE</scope>
    <scope>MUTAGENESIS OF ARG-59 AND HIS-114</scope>
    <source>
        <strain>K12 / MC4100 / ATCC 35695 / DSM 6574</strain>
    </source>
</reference>
<reference key="10">
    <citation type="journal article" date="2005" name="Acta Crystallogr. F">
        <title>The ybeY protein from Escherichia coli is a metalloprotein.</title>
        <authorList>
            <person name="Zhan C."/>
            <person name="Fedorov E.V."/>
            <person name="Shi W."/>
            <person name="Ramagopal U.A."/>
            <person name="Thirumuruhan R."/>
            <person name="Manjasetty B.A."/>
            <person name="Almo S.C."/>
            <person name="Fiser A."/>
            <person name="Chance M.R."/>
            <person name="Fedorov A.A."/>
        </authorList>
    </citation>
    <scope>X-RAY CRYSTALLOGRAPHY (2.70 ANGSTROMS) IN COMPLEX WITH DIVALENT METAL CATIONS</scope>
    <scope>FUNCTION</scope>
</reference>
<evidence type="ECO:0000255" key="1">
    <source>
        <dbReference type="HAMAP-Rule" id="MF_00009"/>
    </source>
</evidence>
<evidence type="ECO:0000269" key="2">
    <source>
    </source>
</evidence>
<evidence type="ECO:0000269" key="3">
    <source>
    </source>
</evidence>
<evidence type="ECO:0000269" key="4">
    <source>
    </source>
</evidence>
<evidence type="ECO:0000269" key="5">
    <source>
    </source>
</evidence>
<evidence type="ECO:0000269" key="6">
    <source>
    </source>
</evidence>
<evidence type="ECO:0000269" key="7">
    <source>
    </source>
</evidence>
<evidence type="ECO:0000305" key="8"/>
<evidence type="ECO:0007829" key="9">
    <source>
        <dbReference type="PDB" id="1XM5"/>
    </source>
</evidence>
<accession>P0A898</accession>
<accession>P77385</accession>